<proteinExistence type="evidence at protein level"/>
<gene>
    <name type="primary">POLR1E</name>
    <name evidence="11" type="synonym">PAF53</name>
    <name type="synonym">PRAF1</name>
</gene>
<keyword id="KW-0002">3D-structure</keyword>
<keyword id="KW-0007">Acetylation</keyword>
<keyword id="KW-0025">Alternative splicing</keyword>
<keyword id="KW-0240">DNA-directed RNA polymerase</keyword>
<keyword id="KW-0539">Nucleus</keyword>
<keyword id="KW-0597">Phosphoprotein</keyword>
<keyword id="KW-1267">Proteomics identification</keyword>
<keyword id="KW-1185">Reference proteome</keyword>
<keyword id="KW-0804">Transcription</keyword>
<reference key="1">
    <citation type="journal article" date="2004" name="Nat. Genet.">
        <title>Complete sequencing and characterization of 21,243 full-length human cDNAs.</title>
        <authorList>
            <person name="Ota T."/>
            <person name="Suzuki Y."/>
            <person name="Nishikawa T."/>
            <person name="Otsuki T."/>
            <person name="Sugiyama T."/>
            <person name="Irie R."/>
            <person name="Wakamatsu A."/>
            <person name="Hayashi K."/>
            <person name="Sato H."/>
            <person name="Nagai K."/>
            <person name="Kimura K."/>
            <person name="Makita H."/>
            <person name="Sekine M."/>
            <person name="Obayashi M."/>
            <person name="Nishi T."/>
            <person name="Shibahara T."/>
            <person name="Tanaka T."/>
            <person name="Ishii S."/>
            <person name="Yamamoto J."/>
            <person name="Saito K."/>
            <person name="Kawai Y."/>
            <person name="Isono Y."/>
            <person name="Nakamura Y."/>
            <person name="Nagahari K."/>
            <person name="Murakami K."/>
            <person name="Yasuda T."/>
            <person name="Iwayanagi T."/>
            <person name="Wagatsuma M."/>
            <person name="Shiratori A."/>
            <person name="Sudo H."/>
            <person name="Hosoiri T."/>
            <person name="Kaku Y."/>
            <person name="Kodaira H."/>
            <person name="Kondo H."/>
            <person name="Sugawara M."/>
            <person name="Takahashi M."/>
            <person name="Kanda K."/>
            <person name="Yokoi T."/>
            <person name="Furuya T."/>
            <person name="Kikkawa E."/>
            <person name="Omura Y."/>
            <person name="Abe K."/>
            <person name="Kamihara K."/>
            <person name="Katsuta N."/>
            <person name="Sato K."/>
            <person name="Tanikawa M."/>
            <person name="Yamazaki M."/>
            <person name="Ninomiya K."/>
            <person name="Ishibashi T."/>
            <person name="Yamashita H."/>
            <person name="Murakawa K."/>
            <person name="Fujimori K."/>
            <person name="Tanai H."/>
            <person name="Kimata M."/>
            <person name="Watanabe M."/>
            <person name="Hiraoka S."/>
            <person name="Chiba Y."/>
            <person name="Ishida S."/>
            <person name="Ono Y."/>
            <person name="Takiguchi S."/>
            <person name="Watanabe S."/>
            <person name="Yosida M."/>
            <person name="Hotuta T."/>
            <person name="Kusano J."/>
            <person name="Kanehori K."/>
            <person name="Takahashi-Fujii A."/>
            <person name="Hara H."/>
            <person name="Tanase T.-O."/>
            <person name="Nomura Y."/>
            <person name="Togiya S."/>
            <person name="Komai F."/>
            <person name="Hara R."/>
            <person name="Takeuchi K."/>
            <person name="Arita M."/>
            <person name="Imose N."/>
            <person name="Musashino K."/>
            <person name="Yuuki H."/>
            <person name="Oshima A."/>
            <person name="Sasaki N."/>
            <person name="Aotsuka S."/>
            <person name="Yoshikawa Y."/>
            <person name="Matsunawa H."/>
            <person name="Ichihara T."/>
            <person name="Shiohata N."/>
            <person name="Sano S."/>
            <person name="Moriya S."/>
            <person name="Momiyama H."/>
            <person name="Satoh N."/>
            <person name="Takami S."/>
            <person name="Terashima Y."/>
            <person name="Suzuki O."/>
            <person name="Nakagawa S."/>
            <person name="Senoh A."/>
            <person name="Mizoguchi H."/>
            <person name="Goto Y."/>
            <person name="Shimizu F."/>
            <person name="Wakebe H."/>
            <person name="Hishigaki H."/>
            <person name="Watanabe T."/>
            <person name="Sugiyama A."/>
            <person name="Takemoto M."/>
            <person name="Kawakami B."/>
            <person name="Yamazaki M."/>
            <person name="Watanabe K."/>
            <person name="Kumagai A."/>
            <person name="Itakura S."/>
            <person name="Fukuzumi Y."/>
            <person name="Fujimori Y."/>
            <person name="Komiyama M."/>
            <person name="Tashiro H."/>
            <person name="Tanigami A."/>
            <person name="Fujiwara T."/>
            <person name="Ono T."/>
            <person name="Yamada K."/>
            <person name="Fujii Y."/>
            <person name="Ozaki K."/>
            <person name="Hirao M."/>
            <person name="Ohmori Y."/>
            <person name="Kawabata A."/>
            <person name="Hikiji T."/>
            <person name="Kobatake N."/>
            <person name="Inagaki H."/>
            <person name="Ikema Y."/>
            <person name="Okamoto S."/>
            <person name="Okitani R."/>
            <person name="Kawakami T."/>
            <person name="Noguchi S."/>
            <person name="Itoh T."/>
            <person name="Shigeta K."/>
            <person name="Senba T."/>
            <person name="Matsumura K."/>
            <person name="Nakajima Y."/>
            <person name="Mizuno T."/>
            <person name="Morinaga M."/>
            <person name="Sasaki M."/>
            <person name="Togashi T."/>
            <person name="Oyama M."/>
            <person name="Hata H."/>
            <person name="Watanabe M."/>
            <person name="Komatsu T."/>
            <person name="Mizushima-Sugano J."/>
            <person name="Satoh T."/>
            <person name="Shirai Y."/>
            <person name="Takahashi Y."/>
            <person name="Nakagawa K."/>
            <person name="Okumura K."/>
            <person name="Nagase T."/>
            <person name="Nomura N."/>
            <person name="Kikuchi H."/>
            <person name="Masuho Y."/>
            <person name="Yamashita R."/>
            <person name="Nakai K."/>
            <person name="Yada T."/>
            <person name="Nakamura Y."/>
            <person name="Ohara O."/>
            <person name="Isogai T."/>
            <person name="Sugano S."/>
        </authorList>
    </citation>
    <scope>NUCLEOTIDE SEQUENCE [LARGE SCALE MRNA] (ISOFORMS 1 AND 2)</scope>
    <source>
        <tissue>Placenta</tissue>
    </source>
</reference>
<reference key="2">
    <citation type="submission" date="2004-06" db="EMBL/GenBank/DDBJ databases">
        <title>Cloning of human full open reading frames in Gateway(TM) system entry vector (pDONR201).</title>
        <authorList>
            <person name="Ebert L."/>
            <person name="Schick M."/>
            <person name="Neubert P."/>
            <person name="Schatten R."/>
            <person name="Henze S."/>
            <person name="Korn B."/>
        </authorList>
    </citation>
    <scope>NUCLEOTIDE SEQUENCE [LARGE SCALE MRNA] (ISOFORM 2)</scope>
</reference>
<reference key="3">
    <citation type="journal article" date="2004" name="Nature">
        <title>DNA sequence and analysis of human chromosome 9.</title>
        <authorList>
            <person name="Humphray S.J."/>
            <person name="Oliver K."/>
            <person name="Hunt A.R."/>
            <person name="Plumb R.W."/>
            <person name="Loveland J.E."/>
            <person name="Howe K.L."/>
            <person name="Andrews T.D."/>
            <person name="Searle S."/>
            <person name="Hunt S.E."/>
            <person name="Scott C.E."/>
            <person name="Jones M.C."/>
            <person name="Ainscough R."/>
            <person name="Almeida J.P."/>
            <person name="Ambrose K.D."/>
            <person name="Ashwell R.I.S."/>
            <person name="Babbage A.K."/>
            <person name="Babbage S."/>
            <person name="Bagguley C.L."/>
            <person name="Bailey J."/>
            <person name="Banerjee R."/>
            <person name="Barker D.J."/>
            <person name="Barlow K.F."/>
            <person name="Bates K."/>
            <person name="Beasley H."/>
            <person name="Beasley O."/>
            <person name="Bird C.P."/>
            <person name="Bray-Allen S."/>
            <person name="Brown A.J."/>
            <person name="Brown J.Y."/>
            <person name="Burford D."/>
            <person name="Burrill W."/>
            <person name="Burton J."/>
            <person name="Carder C."/>
            <person name="Carter N.P."/>
            <person name="Chapman J.C."/>
            <person name="Chen Y."/>
            <person name="Clarke G."/>
            <person name="Clark S.Y."/>
            <person name="Clee C.M."/>
            <person name="Clegg S."/>
            <person name="Collier R.E."/>
            <person name="Corby N."/>
            <person name="Crosier M."/>
            <person name="Cummings A.T."/>
            <person name="Davies J."/>
            <person name="Dhami P."/>
            <person name="Dunn M."/>
            <person name="Dutta I."/>
            <person name="Dyer L.W."/>
            <person name="Earthrowl M.E."/>
            <person name="Faulkner L."/>
            <person name="Fleming C.J."/>
            <person name="Frankish A."/>
            <person name="Frankland J.A."/>
            <person name="French L."/>
            <person name="Fricker D.G."/>
            <person name="Garner P."/>
            <person name="Garnett J."/>
            <person name="Ghori J."/>
            <person name="Gilbert J.G.R."/>
            <person name="Glison C."/>
            <person name="Grafham D.V."/>
            <person name="Gribble S."/>
            <person name="Griffiths C."/>
            <person name="Griffiths-Jones S."/>
            <person name="Grocock R."/>
            <person name="Guy J."/>
            <person name="Hall R.E."/>
            <person name="Hammond S."/>
            <person name="Harley J.L."/>
            <person name="Harrison E.S.I."/>
            <person name="Hart E.A."/>
            <person name="Heath P.D."/>
            <person name="Henderson C.D."/>
            <person name="Hopkins B.L."/>
            <person name="Howard P.J."/>
            <person name="Howden P.J."/>
            <person name="Huckle E."/>
            <person name="Johnson C."/>
            <person name="Johnson D."/>
            <person name="Joy A.A."/>
            <person name="Kay M."/>
            <person name="Keenan S."/>
            <person name="Kershaw J.K."/>
            <person name="Kimberley A.M."/>
            <person name="King A."/>
            <person name="Knights A."/>
            <person name="Laird G.K."/>
            <person name="Langford C."/>
            <person name="Lawlor S."/>
            <person name="Leongamornlert D.A."/>
            <person name="Leversha M."/>
            <person name="Lloyd C."/>
            <person name="Lloyd D.M."/>
            <person name="Lovell J."/>
            <person name="Martin S."/>
            <person name="Mashreghi-Mohammadi M."/>
            <person name="Matthews L."/>
            <person name="McLaren S."/>
            <person name="McLay K.E."/>
            <person name="McMurray A."/>
            <person name="Milne S."/>
            <person name="Nickerson T."/>
            <person name="Nisbett J."/>
            <person name="Nordsiek G."/>
            <person name="Pearce A.V."/>
            <person name="Peck A.I."/>
            <person name="Porter K.M."/>
            <person name="Pandian R."/>
            <person name="Pelan S."/>
            <person name="Phillimore B."/>
            <person name="Povey S."/>
            <person name="Ramsey Y."/>
            <person name="Rand V."/>
            <person name="Scharfe M."/>
            <person name="Sehra H.K."/>
            <person name="Shownkeen R."/>
            <person name="Sims S.K."/>
            <person name="Skuce C.D."/>
            <person name="Smith M."/>
            <person name="Steward C.A."/>
            <person name="Swarbreck D."/>
            <person name="Sycamore N."/>
            <person name="Tester J."/>
            <person name="Thorpe A."/>
            <person name="Tracey A."/>
            <person name="Tromans A."/>
            <person name="Thomas D.W."/>
            <person name="Wall M."/>
            <person name="Wallis J.M."/>
            <person name="West A.P."/>
            <person name="Whitehead S.L."/>
            <person name="Willey D.L."/>
            <person name="Williams S.A."/>
            <person name="Wilming L."/>
            <person name="Wray P.W."/>
            <person name="Young L."/>
            <person name="Ashurst J.L."/>
            <person name="Coulson A."/>
            <person name="Blocker H."/>
            <person name="Durbin R.M."/>
            <person name="Sulston J.E."/>
            <person name="Hubbard T."/>
            <person name="Jackson M.J."/>
            <person name="Bentley D.R."/>
            <person name="Beck S."/>
            <person name="Rogers J."/>
            <person name="Dunham I."/>
        </authorList>
    </citation>
    <scope>NUCLEOTIDE SEQUENCE [LARGE SCALE GENOMIC DNA]</scope>
</reference>
<reference key="4">
    <citation type="journal article" date="2004" name="Genome Res.">
        <title>The status, quality, and expansion of the NIH full-length cDNA project: the Mammalian Gene Collection (MGC).</title>
        <authorList>
            <consortium name="The MGC Project Team"/>
        </authorList>
    </citation>
    <scope>NUCLEOTIDE SEQUENCE [LARGE SCALE MRNA] (ISOFORM 2)</scope>
    <scope>VARIANT LYS-383</scope>
    <source>
        <tissue>Cervix</tissue>
        <tissue>Lung</tissue>
    </source>
</reference>
<reference key="5">
    <citation type="journal article" date="2002" name="Mol. Biol. Cell">
        <title>Functional proteomic analysis of human nucleolus.</title>
        <authorList>
            <person name="Scherl A."/>
            <person name="Coute Y."/>
            <person name="Deon C."/>
            <person name="Calle A."/>
            <person name="Kindbeiter K."/>
            <person name="Sanchez J.-C."/>
            <person name="Greco A."/>
            <person name="Hochstrasser D.F."/>
            <person name="Diaz J.-J."/>
        </authorList>
    </citation>
    <scope>SUBCELLULAR LOCATION [LARGE SCALE ANALYSIS]</scope>
    <source>
        <tissue>Cervix carcinoma</tissue>
    </source>
</reference>
<reference key="6">
    <citation type="journal article" date="2006" name="Mol. Cell. Biol.">
        <title>RNA polymerase I-specific subunit CAST/hPAF49 has a role in the activation of transcription by upstream binding factor.</title>
        <authorList>
            <person name="Panov K.I."/>
            <person name="Panova T.B."/>
            <person name="Gadal O."/>
            <person name="Nishiyama K."/>
            <person name="Saito T."/>
            <person name="Russell J."/>
            <person name="Zomerdijk J.C.B.M."/>
        </authorList>
    </citation>
    <scope>IDENTIFICATION IN THE RNA POL I COMPLEX</scope>
</reference>
<reference key="7">
    <citation type="journal article" date="2008" name="Proc. Natl. Acad. Sci. U.S.A.">
        <title>A quantitative atlas of mitotic phosphorylation.</title>
        <authorList>
            <person name="Dephoure N."/>
            <person name="Zhou C."/>
            <person name="Villen J."/>
            <person name="Beausoleil S.A."/>
            <person name="Bakalarski C.E."/>
            <person name="Elledge S.J."/>
            <person name="Gygi S.P."/>
        </authorList>
    </citation>
    <scope>IDENTIFICATION BY MASS SPECTROMETRY [LARGE SCALE ANALYSIS]</scope>
    <source>
        <tissue>Cervix carcinoma</tissue>
    </source>
</reference>
<reference key="8">
    <citation type="journal article" date="2010" name="Sci. Signal.">
        <title>Quantitative phosphoproteomics reveals widespread full phosphorylation site occupancy during mitosis.</title>
        <authorList>
            <person name="Olsen J.V."/>
            <person name="Vermeulen M."/>
            <person name="Santamaria A."/>
            <person name="Kumar C."/>
            <person name="Miller M.L."/>
            <person name="Jensen L.J."/>
            <person name="Gnad F."/>
            <person name="Cox J."/>
            <person name="Jensen T.S."/>
            <person name="Nigg E.A."/>
            <person name="Brunak S."/>
            <person name="Mann M."/>
        </authorList>
    </citation>
    <scope>PHOSPHORYLATION [LARGE SCALE ANALYSIS] AT SER-35</scope>
    <scope>IDENTIFICATION BY MASS SPECTROMETRY [LARGE SCALE ANALYSIS]</scope>
    <source>
        <tissue>Cervix carcinoma</tissue>
    </source>
</reference>
<reference key="9">
    <citation type="journal article" date="2011" name="BMC Syst. Biol.">
        <title>Initial characterization of the human central proteome.</title>
        <authorList>
            <person name="Burkard T.R."/>
            <person name="Planyavsky M."/>
            <person name="Kaupe I."/>
            <person name="Breitwieser F.P."/>
            <person name="Buerckstuemmer T."/>
            <person name="Bennett K.L."/>
            <person name="Superti-Furga G."/>
            <person name="Colinge J."/>
        </authorList>
    </citation>
    <scope>IDENTIFICATION BY MASS SPECTROMETRY [LARGE SCALE ANALYSIS]</scope>
</reference>
<reference key="10">
    <citation type="journal article" date="2011" name="Sci. Signal.">
        <title>System-wide temporal characterization of the proteome and phosphoproteome of human embryonic stem cell differentiation.</title>
        <authorList>
            <person name="Rigbolt K.T."/>
            <person name="Prokhorova T.A."/>
            <person name="Akimov V."/>
            <person name="Henningsen J."/>
            <person name="Johansen P.T."/>
            <person name="Kratchmarova I."/>
            <person name="Kassem M."/>
            <person name="Mann M."/>
            <person name="Olsen J.V."/>
            <person name="Blagoev B."/>
        </authorList>
    </citation>
    <scope>PHOSPHORYLATION [LARGE SCALE ANALYSIS] AT SER-163</scope>
    <scope>IDENTIFICATION BY MASS SPECTROMETRY [LARGE SCALE ANALYSIS]</scope>
</reference>
<reference key="11">
    <citation type="journal article" date="2013" name="J. Proteome Res.">
        <title>Toward a comprehensive characterization of a human cancer cell phosphoproteome.</title>
        <authorList>
            <person name="Zhou H."/>
            <person name="Di Palma S."/>
            <person name="Preisinger C."/>
            <person name="Peng M."/>
            <person name="Polat A.N."/>
            <person name="Heck A.J."/>
            <person name="Mohammed S."/>
        </authorList>
    </citation>
    <scope>PHOSPHORYLATION [LARGE SCALE ANALYSIS] AT SER-35</scope>
    <scope>IDENTIFICATION BY MASS SPECTROMETRY [LARGE SCALE ANALYSIS]</scope>
    <source>
        <tissue>Cervix carcinoma</tissue>
    </source>
</reference>
<reference key="12">
    <citation type="journal article" date="2017" name="Dev. Cell">
        <title>PWP1 Mediates Nutrient-Dependent Growth Control through Nucleolar Regulation of Ribosomal Gene Expression.</title>
        <authorList>
            <person name="Liu Y."/>
            <person name="Mattila J."/>
            <person name="Ventelae S."/>
            <person name="Yadav L."/>
            <person name="Zhang W."/>
            <person name="Lamichane N."/>
            <person name="Sundstroem J."/>
            <person name="Kauko O."/>
            <person name="Grenman R."/>
            <person name="Varjosalo M."/>
            <person name="Westermarck J."/>
            <person name="Hietakangas V."/>
        </authorList>
    </citation>
    <scope>ASSOCIATION WITH THE RNA POLYMERASE I COMPLEX</scope>
    <scope>INTERACTION WITH PWP1</scope>
</reference>
<reference key="13">
    <citation type="journal article" date="2013" name="Mol. Cell">
        <title>Repression of RNA polymerase I upon stress is caused by inhibition of RNA-dependent deacetylation of PAF53 by SIRT7.</title>
        <authorList>
            <person name="Chen S."/>
            <person name="Seiler J."/>
            <person name="Santiago-Reichelt M."/>
            <person name="Felbel K."/>
            <person name="Grummt I."/>
            <person name="Voit R."/>
        </authorList>
    </citation>
    <scope>FUNCTION</scope>
    <scope>SUBCELLULAR LOCATION</scope>
    <scope>ACETYLATION AT LYS-373</scope>
    <scope>MUTAGENESIS OF LYS-373</scope>
</reference>
<reference key="14">
    <citation type="journal article" date="2021" name="Cell Discov.">
        <title>Structure of the human RNA polymerase I elongation complex.</title>
        <authorList>
            <person name="Zhao D."/>
            <person name="Liu W."/>
            <person name="Chen K."/>
            <person name="Wu Z."/>
            <person name="Yang H."/>
            <person name="Xu Y."/>
        </authorList>
    </citation>
    <scope>STRUCTURE BY ELECTRON MICROSCOPY (2.81 ANGSTROMS)</scope>
    <scope>FUNCTION OF POL I</scope>
    <scope>SUBUNIT</scope>
</reference>
<reference key="15">
    <citation type="journal article" date="2021" name="Nat. Struct. Mol. Biol.">
        <title>Cryo-EM structures of human RNA polymerase I.</title>
        <authorList>
            <person name="Misiaszek A.D."/>
            <person name="Girbig M."/>
            <person name="Grotsch H."/>
            <person name="Baudin F."/>
            <person name="Murciano B."/>
            <person name="Lafita A."/>
            <person name="Muller C.W."/>
        </authorList>
    </citation>
    <scope>STRUCTURE BY ELECTRON MICROSCOPY (2.70 ANGSTROMS)</scope>
    <scope>FUNCTION OF POL I</scope>
    <scope>SUBUNIT</scope>
</reference>
<reference key="16">
    <citation type="journal article" date="2022" name="Life. Sci Alliance">
        <title>The human RNA polymerase I structure reveals an HMG-like docking domain specific to metazoans.</title>
        <authorList>
            <person name="Daiss J.L."/>
            <person name="Pilsl M."/>
            <person name="Straub K."/>
            <person name="Bleckmann A."/>
            <person name="Hocherl M."/>
            <person name="Heiss F.B."/>
            <person name="Abascal-Palacios G."/>
            <person name="Ramsay E.P."/>
            <person name="Tluckova K."/>
            <person name="Mars J.C."/>
            <person name="Furtges T."/>
            <person name="Bruckmann A."/>
            <person name="Rudack T."/>
            <person name="Bernecky C."/>
            <person name="Lamour V."/>
            <person name="Panov K."/>
            <person name="Vannini A."/>
            <person name="Moss T."/>
            <person name="Engel C."/>
        </authorList>
    </citation>
    <scope>STRUCTURE BY ELECTRON MICROSCOPY (4.09 ANGSTROMS)</scope>
    <scope>FUNCTION OF POL I</scope>
    <scope>SUBUNIT</scope>
</reference>
<sequence>MAAEVLPSARWQYCGAPDGSQRAVLVQFSNGKLQSPGNMRFTLYENKDSTNPRKRNQRILAAETDRLSYVGNNFGTGALKCNTLCRHFVGILNKTSGQMEVYDAELFNMQPLFSDVSVESELALESQTKTYREKMDSCIEAFGTTKQKRALNTRRMNRVGNESLNRAVAKAAETIIDTKGVTALVSDAIHNDLQDDSLYLPPCYDDAAKPEDVYKFEDLLSPAEYEALQSPSEAFRNVTSEEILKMIEENSHCTFVIEALKSLPSDVESRDRQARCIWFLDTLIKFRAHRVVKRKSALGPGVPHIINTKLLKHFTCLTYNNGRLRNLISDSMKAKITAYVIILALHIHDFQIDLTVLQRDLKLSEKRMMEIAKAMRLKISKRRVSVAAGSEEDHKLGTLSLPLPPAQTSDRLAKRRKIT</sequence>
<dbReference type="EMBL" id="AK023452">
    <property type="protein sequence ID" value="BAB14579.1"/>
    <property type="molecule type" value="mRNA"/>
</dbReference>
<dbReference type="EMBL" id="AK024032">
    <property type="protein sequence ID" value="BAB14791.1"/>
    <property type="molecule type" value="mRNA"/>
</dbReference>
<dbReference type="EMBL" id="AK091294">
    <property type="protein sequence ID" value="BAC03629.1"/>
    <property type="molecule type" value="mRNA"/>
</dbReference>
<dbReference type="EMBL" id="CR457313">
    <property type="protein sequence ID" value="CAG33594.1"/>
    <property type="molecule type" value="mRNA"/>
</dbReference>
<dbReference type="EMBL" id="AL158156">
    <property type="status" value="NOT_ANNOTATED_CDS"/>
    <property type="molecule type" value="Genomic_DNA"/>
</dbReference>
<dbReference type="EMBL" id="BC001337">
    <property type="protein sequence ID" value="AAH01337.1"/>
    <property type="molecule type" value="mRNA"/>
</dbReference>
<dbReference type="EMBL" id="BC014331">
    <property type="protein sequence ID" value="AAH14331.1"/>
    <property type="molecule type" value="mRNA"/>
</dbReference>
<dbReference type="CCDS" id="CCDS6611.1">
    <molecule id="Q9GZS1-2"/>
</dbReference>
<dbReference type="RefSeq" id="NP_001269695.1">
    <property type="nucleotide sequence ID" value="NM_001282766.1"/>
</dbReference>
<dbReference type="RefSeq" id="NP_071935.1">
    <molecule id="Q9GZS1-2"/>
    <property type="nucleotide sequence ID" value="NM_022490.4"/>
</dbReference>
<dbReference type="RefSeq" id="XP_005251604.1">
    <property type="nucleotide sequence ID" value="XM_005251547.2"/>
</dbReference>
<dbReference type="RefSeq" id="XP_047279685.1">
    <molecule id="Q9GZS1-1"/>
    <property type="nucleotide sequence ID" value="XM_047423729.1"/>
</dbReference>
<dbReference type="PDB" id="7OB9">
    <property type="method" value="EM"/>
    <property type="resolution" value="2.70 A"/>
    <property type="chains" value="M=1-419"/>
</dbReference>
<dbReference type="PDB" id="7OBA">
    <property type="method" value="EM"/>
    <property type="resolution" value="3.10 A"/>
    <property type="chains" value="M=1-419"/>
</dbReference>
<dbReference type="PDB" id="7OBB">
    <property type="method" value="EM"/>
    <property type="resolution" value="3.30 A"/>
    <property type="chains" value="M=1-419"/>
</dbReference>
<dbReference type="PDB" id="7VBA">
    <property type="method" value="EM"/>
    <property type="resolution" value="2.89 A"/>
    <property type="chains" value="M=1-419"/>
</dbReference>
<dbReference type="PDB" id="7VBB">
    <property type="method" value="EM"/>
    <property type="resolution" value="2.81 A"/>
    <property type="chains" value="M=1-419"/>
</dbReference>
<dbReference type="PDB" id="7VBC">
    <property type="method" value="EM"/>
    <property type="resolution" value="3.01 A"/>
    <property type="chains" value="M=1-419"/>
</dbReference>
<dbReference type="PDB" id="8A43">
    <property type="method" value="EM"/>
    <property type="resolution" value="4.09 A"/>
    <property type="chains" value="N=1-419"/>
</dbReference>
<dbReference type="PDBsum" id="7OB9"/>
<dbReference type="PDBsum" id="7OBA"/>
<dbReference type="PDBsum" id="7OBB"/>
<dbReference type="PDBsum" id="7VBA"/>
<dbReference type="PDBsum" id="7VBB"/>
<dbReference type="PDBsum" id="7VBC"/>
<dbReference type="PDBsum" id="8A43"/>
<dbReference type="EMDB" id="EMD-12795"/>
<dbReference type="EMDB" id="EMD-12796"/>
<dbReference type="EMDB" id="EMD-12797"/>
<dbReference type="EMDB" id="EMD-15135"/>
<dbReference type="EMDB" id="EMD-31876"/>
<dbReference type="EMDB" id="EMD-31877"/>
<dbReference type="EMDB" id="EMD-31878"/>
<dbReference type="SMR" id="Q9GZS1"/>
<dbReference type="BioGRID" id="122173">
    <property type="interactions" value="357"/>
</dbReference>
<dbReference type="ComplexPortal" id="CPX-2386">
    <property type="entry name" value="DNA-directed RNA polymerase I complex"/>
</dbReference>
<dbReference type="CORUM" id="Q9GZS1"/>
<dbReference type="DIP" id="DIP-27546N"/>
<dbReference type="FunCoup" id="Q9GZS1">
    <property type="interactions" value="1836"/>
</dbReference>
<dbReference type="IntAct" id="Q9GZS1">
    <property type="interactions" value="68"/>
</dbReference>
<dbReference type="MINT" id="Q9GZS1"/>
<dbReference type="STRING" id="9606.ENSP00000367029"/>
<dbReference type="iPTMnet" id="Q9GZS1"/>
<dbReference type="PhosphoSitePlus" id="Q9GZS1"/>
<dbReference type="SwissPalm" id="Q9GZS1"/>
<dbReference type="BioMuta" id="POLR1E"/>
<dbReference type="DMDM" id="62901107"/>
<dbReference type="CPTAC" id="CPTAC-1634"/>
<dbReference type="jPOST" id="Q9GZS1"/>
<dbReference type="MassIVE" id="Q9GZS1"/>
<dbReference type="PaxDb" id="9606-ENSP00000367029"/>
<dbReference type="PeptideAtlas" id="Q9GZS1"/>
<dbReference type="ProteomicsDB" id="80124">
    <molecule id="Q9GZS1-1"/>
</dbReference>
<dbReference type="ProteomicsDB" id="80125">
    <molecule id="Q9GZS1-2"/>
</dbReference>
<dbReference type="Pumba" id="Q9GZS1"/>
<dbReference type="Antibodypedia" id="12019">
    <property type="antibodies" value="165 antibodies from 27 providers"/>
</dbReference>
<dbReference type="DNASU" id="64425"/>
<dbReference type="Ensembl" id="ENST00000377792.3">
    <molecule id="Q9GZS1-1"/>
    <property type="protein sequence ID" value="ENSP00000367023.3"/>
    <property type="gene ID" value="ENSG00000137054.16"/>
</dbReference>
<dbReference type="Ensembl" id="ENST00000377798.9">
    <molecule id="Q9GZS1-2"/>
    <property type="protein sequence ID" value="ENSP00000367029.4"/>
    <property type="gene ID" value="ENSG00000137054.16"/>
</dbReference>
<dbReference type="GeneID" id="64425"/>
<dbReference type="KEGG" id="hsa:64425"/>
<dbReference type="MANE-Select" id="ENST00000377798.9">
    <property type="protein sequence ID" value="ENSP00000367029.4"/>
    <property type="RefSeq nucleotide sequence ID" value="NM_022490.4"/>
    <property type="RefSeq protein sequence ID" value="NP_071935.1"/>
</dbReference>
<dbReference type="UCSC" id="uc003zzy.2">
    <molecule id="Q9GZS1-2"/>
    <property type="organism name" value="human"/>
</dbReference>
<dbReference type="AGR" id="HGNC:17631"/>
<dbReference type="CTD" id="64425"/>
<dbReference type="DisGeNET" id="64425"/>
<dbReference type="GeneCards" id="POLR1E"/>
<dbReference type="HGNC" id="HGNC:17631">
    <property type="gene designation" value="POLR1E"/>
</dbReference>
<dbReference type="HPA" id="ENSG00000137054">
    <property type="expression patterns" value="Low tissue specificity"/>
</dbReference>
<dbReference type="MIM" id="621031">
    <property type="type" value="gene"/>
</dbReference>
<dbReference type="neXtProt" id="NX_Q9GZS1"/>
<dbReference type="OpenTargets" id="ENSG00000137054"/>
<dbReference type="PharmGKB" id="PA142671136"/>
<dbReference type="VEuPathDB" id="HostDB:ENSG00000137054"/>
<dbReference type="eggNOG" id="KOG4183">
    <property type="taxonomic scope" value="Eukaryota"/>
</dbReference>
<dbReference type="GeneTree" id="ENSGT00390000018004"/>
<dbReference type="HOGENOM" id="CLU_034953_0_0_1"/>
<dbReference type="InParanoid" id="Q9GZS1"/>
<dbReference type="OMA" id="DVYPFDE"/>
<dbReference type="OrthoDB" id="532500at2759"/>
<dbReference type="PAN-GO" id="Q9GZS1">
    <property type="GO annotations" value="4 GO annotations based on evolutionary models"/>
</dbReference>
<dbReference type="PhylomeDB" id="Q9GZS1"/>
<dbReference type="TreeFam" id="TF331685"/>
<dbReference type="PathwayCommons" id="Q9GZS1"/>
<dbReference type="Reactome" id="R-HSA-427413">
    <property type="pathway name" value="NoRC negatively regulates rRNA expression"/>
</dbReference>
<dbReference type="Reactome" id="R-HSA-5250924">
    <property type="pathway name" value="B-WICH complex positively regulates rRNA expression"/>
</dbReference>
<dbReference type="Reactome" id="R-HSA-73762">
    <property type="pathway name" value="RNA Polymerase I Transcription Initiation"/>
</dbReference>
<dbReference type="Reactome" id="R-HSA-73772">
    <property type="pathway name" value="RNA Polymerase I Promoter Escape"/>
</dbReference>
<dbReference type="Reactome" id="R-HSA-73863">
    <property type="pathway name" value="RNA Polymerase I Transcription Termination"/>
</dbReference>
<dbReference type="SignaLink" id="Q9GZS1"/>
<dbReference type="SIGNOR" id="Q9GZS1"/>
<dbReference type="BioGRID-ORCS" id="64425">
    <property type="hits" value="642 hits in 1169 CRISPR screens"/>
</dbReference>
<dbReference type="CD-CODE" id="91857CE7">
    <property type="entry name" value="Nucleolus"/>
</dbReference>
<dbReference type="GeneWiki" id="POLR1E"/>
<dbReference type="GenomeRNAi" id="64425"/>
<dbReference type="Pharos" id="Q9GZS1">
    <property type="development level" value="Tbio"/>
</dbReference>
<dbReference type="PRO" id="PR:Q9GZS1"/>
<dbReference type="Proteomes" id="UP000005640">
    <property type="component" value="Chromosome 9"/>
</dbReference>
<dbReference type="RNAct" id="Q9GZS1">
    <property type="molecule type" value="protein"/>
</dbReference>
<dbReference type="Bgee" id="ENSG00000137054">
    <property type="expression patterns" value="Expressed in body of pancreas and 146 other cell types or tissues"/>
</dbReference>
<dbReference type="ExpressionAtlas" id="Q9GZS1">
    <property type="expression patterns" value="baseline and differential"/>
</dbReference>
<dbReference type="GO" id="GO:0001650">
    <property type="term" value="C:fibrillar center"/>
    <property type="evidence" value="ECO:0000314"/>
    <property type="project" value="HPA"/>
</dbReference>
<dbReference type="GO" id="GO:0005730">
    <property type="term" value="C:nucleolus"/>
    <property type="evidence" value="ECO:0000250"/>
    <property type="project" value="HGNC-UCL"/>
</dbReference>
<dbReference type="GO" id="GO:0005654">
    <property type="term" value="C:nucleoplasm"/>
    <property type="evidence" value="ECO:0000314"/>
    <property type="project" value="HPA"/>
</dbReference>
<dbReference type="GO" id="GO:0005736">
    <property type="term" value="C:RNA polymerase I complex"/>
    <property type="evidence" value="ECO:0000314"/>
    <property type="project" value="UniProtKB"/>
</dbReference>
<dbReference type="GO" id="GO:0003677">
    <property type="term" value="F:DNA binding"/>
    <property type="evidence" value="ECO:0007669"/>
    <property type="project" value="InterPro"/>
</dbReference>
<dbReference type="GO" id="GO:0001179">
    <property type="term" value="F:RNA polymerase I general transcription initiation factor binding"/>
    <property type="evidence" value="ECO:0007669"/>
    <property type="project" value="Ensembl"/>
</dbReference>
<dbReference type="GO" id="GO:0042790">
    <property type="term" value="P:nucleolar large rRNA transcription by RNA polymerase I"/>
    <property type="evidence" value="ECO:0000314"/>
    <property type="project" value="UniProtKB"/>
</dbReference>
<dbReference type="GO" id="GO:0001188">
    <property type="term" value="P:RNA polymerase I preinitiation complex assembly"/>
    <property type="evidence" value="ECO:0000318"/>
    <property type="project" value="GO_Central"/>
</dbReference>
<dbReference type="GO" id="GO:0006362">
    <property type="term" value="P:transcription elongation by RNA polymerase I"/>
    <property type="evidence" value="ECO:0000318"/>
    <property type="project" value="GO_Central"/>
</dbReference>
<dbReference type="GO" id="GO:0006361">
    <property type="term" value="P:transcription initiation at RNA polymerase I promoter"/>
    <property type="evidence" value="ECO:0000314"/>
    <property type="project" value="UniProtKB"/>
</dbReference>
<dbReference type="InterPro" id="IPR009668">
    <property type="entry name" value="RNA_pol-assoc_fac_A49-like"/>
</dbReference>
<dbReference type="PANTHER" id="PTHR14440">
    <property type="entry name" value="DNA-DIRECTED RNA POLYMERASE I SUBUNIT RPA49"/>
    <property type="match status" value="1"/>
</dbReference>
<dbReference type="Pfam" id="PF06870">
    <property type="entry name" value="RNA_pol_I_A49"/>
    <property type="match status" value="1"/>
</dbReference>
<comment type="function">
    <text evidence="6 8 9 10">Component of RNA polymerase I (Pol I), a DNA-dependent RNA polymerase which synthesizes ribosomal RNA precursors using the four ribonucleoside triphosphates as substrates (PubMed:24207024, PubMed:34671025, PubMed:34887565, PubMed:36271492). Appears to be involved in the formation of the initiation complex at the promoter by mediating the interaction between Pol I and UBTF/UBF (PubMed:24207024).</text>
</comment>
<comment type="subunit">
    <text evidence="1 5 7 8 9 10">Component of the RNA polymerase I (Pol I) complex consisting of 13 subunits: a ten-subunit catalytic core composed of POLR1A/RPA1, POLR1B/RPA2, POLR1C/RPAC1, POLR1D/RPAC2, POLR1H/RPA12, POLR2E/RPABC1, POLR2F/RPABC2, POLR2H/RPABC3, POLR2K/RPABC4 and POLR2L/RPABC5; a mobile stalk subunit POLR1F/RPA43 protruding from the core and additional subunits homologous to general transcription factors POLR1E/RPA49 and POLR1G/RPA34 (PubMed:16809778, PubMed:29065309, PubMed:34671025, PubMed:34887565, PubMed:36271492). Forms a heterodimer with POLR1G/RPA34 (PubMed:36271492). Interacts with POLR1G (By similarity). Also binds UBTF/UBF (By similarity). Interacts with PWP1 (PubMed:29065309).</text>
</comment>
<comment type="interaction">
    <interactant intactId="EBI-359458">
        <id>Q9GZS1</id>
    </interactant>
    <interactant intactId="EBI-2432309">
        <id>Q92876</id>
        <label>KLK6</label>
    </interactant>
    <organismsDiffer>false</organismsDiffer>
    <experiments>3</experiments>
</comment>
<comment type="interaction">
    <interactant intactId="EBI-359458">
        <id>Q9GZS1</id>
    </interactant>
    <interactant intactId="EBI-352889">
        <id>Q15653</id>
        <label>NFKBIB</label>
    </interactant>
    <organismsDiffer>false</organismsDiffer>
    <experiments>2</experiments>
</comment>
<comment type="subcellular location">
    <subcellularLocation>
        <location evidence="3 6">Nucleus</location>
        <location evidence="3 6">Nucleolus</location>
    </subcellularLocation>
</comment>
<comment type="alternative products">
    <event type="alternative splicing"/>
    <isoform>
        <id>Q9GZS1-2</id>
        <name>2</name>
        <sequence type="displayed"/>
    </isoform>
    <isoform>
        <id>Q9GZS1-1</id>
        <name>1</name>
        <sequence type="described" ref="VSP_059915"/>
    </isoform>
</comment>
<comment type="PTM">
    <text evidence="6">Acetylated at Lys-373 by CREBBP/CBP, leading to decreased RNA polymerase I transcription (PubMed:24207024). In normal conditions, deacetylated by SIRT7, promoting the association of RNA polymerase I with the rDNA promoter region and coding region (PubMed:24207024). In response to stress, SIRT7 is released from nucleoli leading to hyperacetylation of POLR1E/PAF53 and decreased association of RNA polymerase I with the rDNA promoter region (PubMed:24207024).</text>
</comment>
<comment type="miscellaneous">
    <molecule>Isoform 1</molecule>
    <text evidence="12">Dubious isoform produced through intron retention.</text>
</comment>
<comment type="similarity">
    <text evidence="12">Belongs to the eukaryotic RPA49/POLR1E RNA polymerase subunit family.</text>
</comment>
<protein>
    <recommendedName>
        <fullName>DNA-directed RNA polymerase I subunit RPA49</fullName>
        <shortName>RNA polymerase I subunit A49</shortName>
    </recommendedName>
    <alternativeName>
        <fullName>DNA-directed RNA polymerase I subunit E</fullName>
    </alternativeName>
    <alternativeName>
        <fullName>RNA polymerase I-associated factor 1</fullName>
    </alternativeName>
    <alternativeName>
        <fullName evidence="11">RNA polymerase I-associated factor 53</fullName>
    </alternativeName>
</protein>
<feature type="chain" id="PRO_0000073956" description="DNA-directed RNA polymerase I subunit RPA49">
    <location>
        <begin position="1"/>
        <end position="419"/>
    </location>
</feature>
<feature type="region of interest" description="Disordered" evidence="2">
    <location>
        <begin position="397"/>
        <end position="419"/>
    </location>
</feature>
<feature type="modified residue" description="Phosphoserine" evidence="13 15">
    <location>
        <position position="35"/>
    </location>
</feature>
<feature type="modified residue" description="Phosphoserine" evidence="14">
    <location>
        <position position="163"/>
    </location>
</feature>
<feature type="modified residue" description="N6-acetyllysine" evidence="6">
    <location>
        <position position="373"/>
    </location>
</feature>
<feature type="splice variant" id="VSP_059915" description="In isoform 1.">
    <original>MAAEVLPSARWQYCGAPDGSQRAVL</original>
    <variation>MYQASAVSLLPRDIPSCHSPSPGFSHLPTSSSQLAPDLLQFPLGQDPSFLAIPILTLPPSDSLVPPYIVWYIVWPSALISFLGCTLT</variation>
    <location>
        <begin position="1"/>
        <end position="25"/>
    </location>
</feature>
<feature type="sequence variant" id="VAR_022372" description="In dbSNP:rs7863488.">
    <original>D</original>
    <variation>H</variation>
    <location>
        <position position="192"/>
    </location>
</feature>
<feature type="sequence variant" id="VAR_022373" description="In dbSNP:rs7867180.">
    <original>V</original>
    <variation>M</variation>
    <location>
        <position position="356"/>
    </location>
</feature>
<feature type="sequence variant" id="VAR_022374" description="In dbSNP:rs10814571." evidence="4">
    <original>R</original>
    <variation>K</variation>
    <location>
        <position position="383"/>
    </location>
</feature>
<feature type="mutagenesis site" description="Decreased acetylation." evidence="6">
    <original>K</original>
    <variation>R</variation>
    <location>
        <position position="373"/>
    </location>
</feature>
<feature type="strand" evidence="16">
    <location>
        <begin position="8"/>
        <end position="12"/>
    </location>
</feature>
<feature type="turn" evidence="16">
    <location>
        <begin position="19"/>
        <end position="21"/>
    </location>
</feature>
<feature type="strand" evidence="16">
    <location>
        <begin position="22"/>
        <end position="28"/>
    </location>
</feature>
<feature type="strand" evidence="17">
    <location>
        <begin position="32"/>
        <end position="35"/>
    </location>
</feature>
<feature type="strand" evidence="16">
    <location>
        <begin position="40"/>
        <end position="47"/>
    </location>
</feature>
<feature type="turn" evidence="16">
    <location>
        <begin position="52"/>
        <end position="54"/>
    </location>
</feature>
<feature type="strand" evidence="16">
    <location>
        <begin position="58"/>
        <end position="63"/>
    </location>
</feature>
<feature type="strand" evidence="16">
    <location>
        <begin position="68"/>
        <end position="75"/>
    </location>
</feature>
<feature type="turn" evidence="16">
    <location>
        <begin position="80"/>
        <end position="83"/>
    </location>
</feature>
<feature type="strand" evidence="16">
    <location>
        <begin position="84"/>
        <end position="93"/>
    </location>
</feature>
<feature type="turn" evidence="16">
    <location>
        <begin position="94"/>
        <end position="96"/>
    </location>
</feature>
<feature type="strand" evidence="16">
    <location>
        <begin position="98"/>
        <end position="111"/>
    </location>
</feature>
<feature type="turn" evidence="16">
    <location>
        <begin position="118"/>
        <end position="121"/>
    </location>
</feature>
<feature type="strand" evidence="16">
    <location>
        <begin position="130"/>
        <end position="132"/>
    </location>
</feature>
<feature type="helix" evidence="16">
    <location>
        <begin position="133"/>
        <end position="138"/>
    </location>
</feature>
<feature type="strand" evidence="16">
    <location>
        <begin position="139"/>
        <end position="143"/>
    </location>
</feature>
<feature type="helix" evidence="16">
    <location>
        <begin position="146"/>
        <end position="151"/>
    </location>
</feature>
<feature type="helix" evidence="16">
    <location>
        <begin position="154"/>
        <end position="157"/>
    </location>
</feature>
<feature type="helix" evidence="16">
    <location>
        <begin position="163"/>
        <end position="176"/>
    </location>
</feature>
<feature type="strand" evidence="16">
    <location>
        <begin position="177"/>
        <end position="179"/>
    </location>
</feature>
<feature type="helix" evidence="16">
    <location>
        <begin position="181"/>
        <end position="185"/>
    </location>
</feature>
<feature type="helix" evidence="16">
    <location>
        <begin position="186"/>
        <end position="188"/>
    </location>
</feature>
<feature type="strand" evidence="16">
    <location>
        <begin position="210"/>
        <end position="212"/>
    </location>
</feature>
<feature type="helix" evidence="16">
    <location>
        <begin position="222"/>
        <end position="226"/>
    </location>
</feature>
<feature type="helix" evidence="16">
    <location>
        <begin position="227"/>
        <end position="229"/>
    </location>
</feature>
<feature type="helix" evidence="16">
    <location>
        <begin position="254"/>
        <end position="261"/>
    </location>
</feature>
<feature type="turn" evidence="16">
    <location>
        <begin position="262"/>
        <end position="264"/>
    </location>
</feature>
<feature type="strand" evidence="16">
    <location>
        <begin position="266"/>
        <end position="268"/>
    </location>
</feature>
<feature type="turn" evidence="16">
    <location>
        <begin position="272"/>
        <end position="276"/>
    </location>
</feature>
<feature type="helix" evidence="16">
    <location>
        <begin position="277"/>
        <end position="288"/>
    </location>
</feature>
<feature type="helix" evidence="16">
    <location>
        <begin position="304"/>
        <end position="313"/>
    </location>
</feature>
<feature type="strand" evidence="16">
    <location>
        <begin position="316"/>
        <end position="320"/>
    </location>
</feature>
<feature type="strand" evidence="16">
    <location>
        <begin position="323"/>
        <end position="327"/>
    </location>
</feature>
<feature type="helix" evidence="16">
    <location>
        <begin position="330"/>
        <end position="347"/>
    </location>
</feature>
<feature type="turn" evidence="16">
    <location>
        <begin position="348"/>
        <end position="350"/>
    </location>
</feature>
<feature type="helix" evidence="16">
    <location>
        <begin position="354"/>
        <end position="360"/>
    </location>
</feature>
<feature type="helix" evidence="16">
    <location>
        <begin position="365"/>
        <end position="374"/>
    </location>
</feature>
<feature type="strand" evidence="16">
    <location>
        <begin position="389"/>
        <end position="391"/>
    </location>
</feature>
<feature type="sequence conflict" description="In Ref. 1; BAC03629." evidence="12" ref="1">
    <original>T</original>
    <variation>A</variation>
    <location sequence="Q9GZS1-1">
        <position position="56"/>
    </location>
</feature>
<organism>
    <name type="scientific">Homo sapiens</name>
    <name type="common">Human</name>
    <dbReference type="NCBI Taxonomy" id="9606"/>
    <lineage>
        <taxon>Eukaryota</taxon>
        <taxon>Metazoa</taxon>
        <taxon>Chordata</taxon>
        <taxon>Craniata</taxon>
        <taxon>Vertebrata</taxon>
        <taxon>Euteleostomi</taxon>
        <taxon>Mammalia</taxon>
        <taxon>Eutheria</taxon>
        <taxon>Euarchontoglires</taxon>
        <taxon>Primates</taxon>
        <taxon>Haplorrhini</taxon>
        <taxon>Catarrhini</taxon>
        <taxon>Hominidae</taxon>
        <taxon>Homo</taxon>
    </lineage>
</organism>
<evidence type="ECO:0000250" key="1">
    <source>
        <dbReference type="UniProtKB" id="Q8K202"/>
    </source>
</evidence>
<evidence type="ECO:0000256" key="2">
    <source>
        <dbReference type="SAM" id="MobiDB-lite"/>
    </source>
</evidence>
<evidence type="ECO:0000269" key="3">
    <source>
    </source>
</evidence>
<evidence type="ECO:0000269" key="4">
    <source>
    </source>
</evidence>
<evidence type="ECO:0000269" key="5">
    <source>
    </source>
</evidence>
<evidence type="ECO:0000269" key="6">
    <source>
    </source>
</evidence>
<evidence type="ECO:0000269" key="7">
    <source>
    </source>
</evidence>
<evidence type="ECO:0000269" key="8">
    <source>
    </source>
</evidence>
<evidence type="ECO:0000269" key="9">
    <source>
    </source>
</evidence>
<evidence type="ECO:0000269" key="10">
    <source>
    </source>
</evidence>
<evidence type="ECO:0000303" key="11">
    <source>
    </source>
</evidence>
<evidence type="ECO:0000305" key="12"/>
<evidence type="ECO:0007744" key="13">
    <source>
    </source>
</evidence>
<evidence type="ECO:0007744" key="14">
    <source>
    </source>
</evidence>
<evidence type="ECO:0007744" key="15">
    <source>
    </source>
</evidence>
<evidence type="ECO:0007829" key="16">
    <source>
        <dbReference type="PDB" id="7OB9"/>
    </source>
</evidence>
<evidence type="ECO:0007829" key="17">
    <source>
        <dbReference type="PDB" id="7OBB"/>
    </source>
</evidence>
<accession>Q9GZS1</accession>
<accession>Q5VZT3</accession>
<accession>Q8NBA9</accession>
<accession>Q96L20</accession>
<name>RPA49_HUMAN</name>